<sequence length="288" mass="32854">MAATFFGEVVKAPCRAGTEDEEEEEEGRRETPEDREVRLQLARKREVRLLRRQTKTSLEVSLLEKYPCSKFIIAIGNNAVAFLSSFVMNSGVWEEVGCAKLWNEWCRTTDTTHLSSTEAFCVFYHLKSNPSVFLCQCSCYVAEDQQYQWLEKVFGSCPRKNMQITILTCRHVTDYKTSESTGSLPSPFLRALKTQNFKDSACCPLLEQPNIVHDLPAAVLSYCQVWKIPAILYLCYTDVMKLDLITVEAFKPILSTRSLKGLVKNIPQSTEILKKLMTTNEIQSNIYT</sequence>
<feature type="initiator methionine" description="Removed" evidence="11 13 14">
    <location>
        <position position="1"/>
    </location>
</feature>
<feature type="chain" id="PRO_0000080018" description="Proteasome assembly chaperone 1">
    <location>
        <begin position="2"/>
        <end position="288"/>
    </location>
</feature>
<feature type="region of interest" description="Disordered" evidence="1">
    <location>
        <begin position="13"/>
        <end position="35"/>
    </location>
</feature>
<feature type="compositionally biased region" description="Basic and acidic residues" evidence="1">
    <location>
        <begin position="26"/>
        <end position="35"/>
    </location>
</feature>
<feature type="modified residue" description="N-acetylalanine" evidence="11 13 14">
    <location>
        <position position="2"/>
    </location>
</feature>
<feature type="modified residue" description="Phosphothreonine" evidence="15">
    <location>
        <position position="18"/>
    </location>
</feature>
<feature type="modified residue" description="Phosphothreonine" evidence="15">
    <location>
        <position position="54"/>
    </location>
</feature>
<feature type="modified residue" description="Phosphoserine" evidence="15">
    <location>
        <position position="180"/>
    </location>
</feature>
<feature type="modified residue" description="N6-acetyllysine" evidence="12">
    <location>
        <position position="264"/>
    </location>
</feature>
<feature type="splice variant" id="VSP_017261" description="In isoform 2." evidence="6 8">
    <location>
        <begin position="132"/>
        <end position="152"/>
    </location>
</feature>
<feature type="sequence variant" id="VAR_054014" description="In dbSNP:rs8131611.">
    <original>I</original>
    <variation>V</variation>
    <location>
        <position position="166"/>
    </location>
</feature>
<feature type="sequence conflict" description="In Ref. 3; CAG46650." evidence="9" ref="3">
    <original>T</original>
    <variation>S</variation>
    <location>
        <position position="4"/>
    </location>
</feature>
<feature type="strand" evidence="18">
    <location>
        <begin position="15"/>
        <end position="17"/>
    </location>
</feature>
<feature type="strand" evidence="17">
    <location>
        <begin position="20"/>
        <end position="22"/>
    </location>
</feature>
<feature type="helix" evidence="20">
    <location>
        <begin position="25"/>
        <end position="29"/>
    </location>
</feature>
<feature type="helix" evidence="17">
    <location>
        <begin position="32"/>
        <end position="44"/>
    </location>
</feature>
<feature type="strand" evidence="17">
    <location>
        <begin position="48"/>
        <end position="50"/>
    </location>
</feature>
<feature type="turn" evidence="16">
    <location>
        <begin position="52"/>
        <end position="54"/>
    </location>
</feature>
<feature type="helix" evidence="17">
    <location>
        <begin position="62"/>
        <end position="65"/>
    </location>
</feature>
<feature type="strand" evidence="17">
    <location>
        <begin position="69"/>
        <end position="77"/>
    </location>
</feature>
<feature type="helix" evidence="17">
    <location>
        <begin position="78"/>
        <end position="86"/>
    </location>
</feature>
<feature type="turn" evidence="17">
    <location>
        <begin position="87"/>
        <end position="89"/>
    </location>
</feature>
<feature type="strand" evidence="17">
    <location>
        <begin position="93"/>
        <end position="100"/>
    </location>
</feature>
<feature type="strand" evidence="17">
    <location>
        <begin position="121"/>
        <end position="128"/>
    </location>
</feature>
<feature type="strand" evidence="17">
    <location>
        <begin position="132"/>
        <end position="137"/>
    </location>
</feature>
<feature type="helix" evidence="17">
    <location>
        <begin position="143"/>
        <end position="153"/>
    </location>
</feature>
<feature type="turn" evidence="19">
    <location>
        <begin position="154"/>
        <end position="156"/>
    </location>
</feature>
<feature type="strand" evidence="17">
    <location>
        <begin position="163"/>
        <end position="171"/>
    </location>
</feature>
<feature type="helix" evidence="17">
    <location>
        <begin position="172"/>
        <end position="174"/>
    </location>
</feature>
<feature type="strand" evidence="20">
    <location>
        <begin position="178"/>
        <end position="180"/>
    </location>
</feature>
<feature type="helix" evidence="17">
    <location>
        <begin position="181"/>
        <end position="183"/>
    </location>
</feature>
<feature type="strand" evidence="17">
    <location>
        <begin position="186"/>
        <end position="193"/>
    </location>
</feature>
<feature type="strand" evidence="17">
    <location>
        <begin position="212"/>
        <end position="214"/>
    </location>
</feature>
<feature type="helix" evidence="17">
    <location>
        <begin position="215"/>
        <end position="226"/>
    </location>
</feature>
<feature type="strand" evidence="17">
    <location>
        <begin position="230"/>
        <end position="238"/>
    </location>
</feature>
<feature type="helix" evidence="17">
    <location>
        <begin position="244"/>
        <end position="248"/>
    </location>
</feature>
<feature type="helix" evidence="17">
    <location>
        <begin position="249"/>
        <end position="255"/>
    </location>
</feature>
<feature type="strand" evidence="16">
    <location>
        <begin position="256"/>
        <end position="259"/>
    </location>
</feature>
<feature type="turn" evidence="16">
    <location>
        <begin position="260"/>
        <end position="262"/>
    </location>
</feature>
<feature type="helix" evidence="17">
    <location>
        <begin position="266"/>
        <end position="278"/>
    </location>
</feature>
<feature type="strand" evidence="16">
    <location>
        <begin position="285"/>
        <end position="288"/>
    </location>
</feature>
<keyword id="KW-0002">3D-structure</keyword>
<keyword id="KW-0007">Acetylation</keyword>
<keyword id="KW-0025">Alternative splicing</keyword>
<keyword id="KW-0143">Chaperone</keyword>
<keyword id="KW-0963">Cytoplasm</keyword>
<keyword id="KW-0256">Endoplasmic reticulum</keyword>
<keyword id="KW-0597">Phosphoprotein</keyword>
<keyword id="KW-1267">Proteomics identification</keyword>
<keyword id="KW-1185">Reference proteome</keyword>
<reference key="1">
    <citation type="journal article" date="1998" name="Biochem. Biophys. Res. Commun.">
        <title>Identification and characterization of a new gene from human chromosome 21 between markers D21S343 and D21S268 encoding a leucine-rich protein.</title>
        <authorList>
            <person name="Vidal-Taboada J.M."/>
            <person name="Sanz S."/>
            <person name="Egeo A."/>
            <person name="Scartezzini P."/>
            <person name="Oliva R."/>
        </authorList>
    </citation>
    <scope>NUCLEOTIDE SEQUENCE [MRNA] (ISOFORM 1)</scope>
    <scope>TISSUE SPECIFICITY</scope>
</reference>
<reference key="2">
    <citation type="submission" date="2003-11" db="EMBL/GenBank/DDBJ databases">
        <title>First clue of an alternative splicing event in DSCR2, a gene involved in Down syndrome.</title>
        <authorList>
            <person name="Sommer C.A."/>
            <person name="Abrao Possik P."/>
            <person name="Henrique-Silva F."/>
        </authorList>
    </citation>
    <scope>NUCLEOTIDE SEQUENCE [MRNA] (ISOFORM 2)</scope>
</reference>
<reference key="3">
    <citation type="submission" date="2004-06" db="EMBL/GenBank/DDBJ databases">
        <title>Cloning of human full open reading frames in Gateway(TM) system entry vector (pDONR201).</title>
        <authorList>
            <person name="Halleck A."/>
            <person name="Ebert L."/>
            <person name="Mkoundinya M."/>
            <person name="Schick M."/>
            <person name="Eisenstein S."/>
            <person name="Neubert P."/>
            <person name="Kstrang K."/>
            <person name="Schatten R."/>
            <person name="Shen B."/>
            <person name="Henze S."/>
            <person name="Mar W."/>
            <person name="Korn B."/>
            <person name="Zuo D."/>
            <person name="Hu Y."/>
            <person name="LaBaer J."/>
        </authorList>
    </citation>
    <scope>NUCLEOTIDE SEQUENCE [LARGE SCALE MRNA] (ISOFORM 1)</scope>
</reference>
<reference key="4">
    <citation type="journal article" date="2008" name="Nat. Methods">
        <title>Human protein factory for converting the transcriptome into an in vitro-expressed proteome.</title>
        <authorList>
            <person name="Goshima N."/>
            <person name="Kawamura Y."/>
            <person name="Fukumoto A."/>
            <person name="Miura A."/>
            <person name="Honma R."/>
            <person name="Satoh R."/>
            <person name="Wakamatsu A."/>
            <person name="Yamamoto J."/>
            <person name="Kimura K."/>
            <person name="Nishikawa T."/>
            <person name="Andoh T."/>
            <person name="Iida Y."/>
            <person name="Ishikawa K."/>
            <person name="Ito E."/>
            <person name="Kagawa N."/>
            <person name="Kaminaga C."/>
            <person name="Kanehori K."/>
            <person name="Kawakami B."/>
            <person name="Kenmochi K."/>
            <person name="Kimura R."/>
            <person name="Kobayashi M."/>
            <person name="Kuroita T."/>
            <person name="Kuwayama H."/>
            <person name="Maruyama Y."/>
            <person name="Matsuo K."/>
            <person name="Minami K."/>
            <person name="Mitsubori M."/>
            <person name="Mori M."/>
            <person name="Morishita R."/>
            <person name="Murase A."/>
            <person name="Nishikawa A."/>
            <person name="Nishikawa S."/>
            <person name="Okamoto T."/>
            <person name="Sakagami N."/>
            <person name="Sakamoto Y."/>
            <person name="Sasaki Y."/>
            <person name="Seki T."/>
            <person name="Sono S."/>
            <person name="Sugiyama A."/>
            <person name="Sumiya T."/>
            <person name="Takayama T."/>
            <person name="Takayama Y."/>
            <person name="Takeda H."/>
            <person name="Togashi T."/>
            <person name="Yahata K."/>
            <person name="Yamada H."/>
            <person name="Yanagisawa Y."/>
            <person name="Endo Y."/>
            <person name="Imamoto F."/>
            <person name="Kisu Y."/>
            <person name="Tanaka S."/>
            <person name="Isogai T."/>
            <person name="Imai J."/>
            <person name="Watanabe S."/>
            <person name="Nomura N."/>
        </authorList>
    </citation>
    <scope>NUCLEOTIDE SEQUENCE [LARGE SCALE MRNA] (ISOFORM 2)</scope>
</reference>
<reference key="5">
    <citation type="journal article" date="2000" name="Nature">
        <title>The DNA sequence of human chromosome 21.</title>
        <authorList>
            <person name="Hattori M."/>
            <person name="Fujiyama A."/>
            <person name="Taylor T.D."/>
            <person name="Watanabe H."/>
            <person name="Yada T."/>
            <person name="Park H.-S."/>
            <person name="Toyoda A."/>
            <person name="Ishii K."/>
            <person name="Totoki Y."/>
            <person name="Choi D.-K."/>
            <person name="Groner Y."/>
            <person name="Soeda E."/>
            <person name="Ohki M."/>
            <person name="Takagi T."/>
            <person name="Sakaki Y."/>
            <person name="Taudien S."/>
            <person name="Blechschmidt K."/>
            <person name="Polley A."/>
            <person name="Menzel U."/>
            <person name="Delabar J."/>
            <person name="Kumpf K."/>
            <person name="Lehmann R."/>
            <person name="Patterson D."/>
            <person name="Reichwald K."/>
            <person name="Rump A."/>
            <person name="Schillhabel M."/>
            <person name="Schudy A."/>
            <person name="Zimmermann W."/>
            <person name="Rosenthal A."/>
            <person name="Kudoh J."/>
            <person name="Shibuya K."/>
            <person name="Kawasaki K."/>
            <person name="Asakawa S."/>
            <person name="Shintani A."/>
            <person name="Sasaki T."/>
            <person name="Nagamine K."/>
            <person name="Mitsuyama S."/>
            <person name="Antonarakis S.E."/>
            <person name="Minoshima S."/>
            <person name="Shimizu N."/>
            <person name="Nordsiek G."/>
            <person name="Hornischer K."/>
            <person name="Brandt P."/>
            <person name="Scharfe M."/>
            <person name="Schoen O."/>
            <person name="Desario A."/>
            <person name="Reichelt J."/>
            <person name="Kauer G."/>
            <person name="Bloecker H."/>
            <person name="Ramser J."/>
            <person name="Beck A."/>
            <person name="Klages S."/>
            <person name="Hennig S."/>
            <person name="Riesselmann L."/>
            <person name="Dagand E."/>
            <person name="Wehrmeyer S."/>
            <person name="Borzym K."/>
            <person name="Gardiner K."/>
            <person name="Nizetic D."/>
            <person name="Francis F."/>
            <person name="Lehrach H."/>
            <person name="Reinhardt R."/>
            <person name="Yaspo M.-L."/>
        </authorList>
    </citation>
    <scope>NUCLEOTIDE SEQUENCE [LARGE SCALE GENOMIC DNA]</scope>
</reference>
<reference key="6">
    <citation type="submission" date="2005-09" db="EMBL/GenBank/DDBJ databases">
        <authorList>
            <person name="Mural R.J."/>
            <person name="Istrail S."/>
            <person name="Sutton G.G."/>
            <person name="Florea L."/>
            <person name="Halpern A.L."/>
            <person name="Mobarry C.M."/>
            <person name="Lippert R."/>
            <person name="Walenz B."/>
            <person name="Shatkay H."/>
            <person name="Dew I."/>
            <person name="Miller J.R."/>
            <person name="Flanigan M.J."/>
            <person name="Edwards N.J."/>
            <person name="Bolanos R."/>
            <person name="Fasulo D."/>
            <person name="Halldorsson B.V."/>
            <person name="Hannenhalli S."/>
            <person name="Turner R."/>
            <person name="Yooseph S."/>
            <person name="Lu F."/>
            <person name="Nusskern D.R."/>
            <person name="Shue B.C."/>
            <person name="Zheng X.H."/>
            <person name="Zhong F."/>
            <person name="Delcher A.L."/>
            <person name="Huson D.H."/>
            <person name="Kravitz S.A."/>
            <person name="Mouchard L."/>
            <person name="Reinert K."/>
            <person name="Remington K.A."/>
            <person name="Clark A.G."/>
            <person name="Waterman M.S."/>
            <person name="Eichler E.E."/>
            <person name="Adams M.D."/>
            <person name="Hunkapiller M.W."/>
            <person name="Myers E.W."/>
            <person name="Venter J.C."/>
        </authorList>
    </citation>
    <scope>NUCLEOTIDE SEQUENCE [LARGE SCALE GENOMIC DNA]</scope>
</reference>
<reference key="7">
    <citation type="journal article" date="2004" name="Genome Res.">
        <title>The status, quality, and expansion of the NIH full-length cDNA project: the Mammalian Gene Collection (MGC).</title>
        <authorList>
            <consortium name="The MGC Project Team"/>
        </authorList>
    </citation>
    <scope>NUCLEOTIDE SEQUENCE [LARGE SCALE MRNA] (ISOFORM 1)</scope>
    <source>
        <tissue>Eye</tissue>
        <tissue>Muscle</tissue>
    </source>
</reference>
<reference key="8">
    <citation type="journal article" date="2000" name="Biochem. Biophys. Res. Commun.">
        <title>Down syndrome critical region gene 2: expression during mouse development and in human cell lines indicates a function related to cell proliferation.</title>
        <authorList>
            <person name="Vidal-Taboada J.M."/>
            <person name="Lu A."/>
            <person name="Pique M."/>
            <person name="Pons G."/>
            <person name="Gil J."/>
            <person name="Oliva R."/>
        </authorList>
    </citation>
    <scope>TISSUE SPECIFICITY</scope>
</reference>
<reference key="9">
    <citation type="journal article" date="2004" name="Eur. J. Histochem.">
        <title>DSCR2, a Down syndrome critical region protein, is localized to the endoplasmic reticulum of mammalian cells.</title>
        <authorList>
            <person name="Possik P.A."/>
            <person name="Sommer C.A."/>
            <person name="Issa Hori J."/>
            <person name="Machado-Santelli G.M."/>
            <person name="Jamur M.C."/>
            <person name="Henrique-Silva F."/>
        </authorList>
    </citation>
    <scope>SUBCELLULAR LOCATION</scope>
</reference>
<reference key="10">
    <citation type="journal article" date="2005" name="Biochem. Biophys. Res. Commun.">
        <title>Molecular and cellular characterization of the Down syndrome critical region protein 2.</title>
        <authorList>
            <person name="Vesa J."/>
            <person name="Brown Y."/>
            <person name="Greenfield D."/>
            <person name="Korenberg J.R."/>
        </authorList>
    </citation>
    <scope>SUBCELLULAR LOCATION</scope>
</reference>
<reference key="11">
    <citation type="journal article" date="2005" name="Nature">
        <title>A heterodimeric complex that promotes the assembly of mammalian 20S proteasomes.</title>
        <authorList>
            <person name="Hirano Y."/>
            <person name="Hendil K.B."/>
            <person name="Yashiroda H."/>
            <person name="Iemura S."/>
            <person name="Nagane R."/>
            <person name="Hioki Y."/>
            <person name="Natsume T."/>
            <person name="Tanaka K."/>
            <person name="Murata S."/>
        </authorList>
    </citation>
    <scope>IDENTIFICATION (ISOFORM 1)</scope>
    <scope>FUNCTION</scope>
    <scope>INTERACTION WITH PSMA5; PSMA7 AND PSMG2</scope>
    <scope>DEGRADATION BY THE PROTEASOME</scope>
</reference>
<reference key="12">
    <citation type="journal article" date="2007" name="Mol. Cell">
        <title>20S proteasome assembly is orchestrated by two distinct pairs of chaperones in yeast and in mammals.</title>
        <authorList>
            <person name="Le Tallec B."/>
            <person name="Barrault M.-B."/>
            <person name="Courbeyrette R."/>
            <person name="Guerois R."/>
            <person name="Marsolier-Kergoat M.-C."/>
            <person name="Peyroche A."/>
        </authorList>
    </citation>
    <scope>FUNCTION</scope>
</reference>
<reference key="13">
    <citation type="journal article" date="2009" name="Anal. Chem.">
        <title>Lys-N and trypsin cover complementary parts of the phosphoproteome in a refined SCX-based approach.</title>
        <authorList>
            <person name="Gauci S."/>
            <person name="Helbig A.O."/>
            <person name="Slijper M."/>
            <person name="Krijgsveld J."/>
            <person name="Heck A.J."/>
            <person name="Mohammed S."/>
        </authorList>
    </citation>
    <scope>ACETYLATION [LARGE SCALE ANALYSIS] AT ALA-2</scope>
    <scope>CLEAVAGE OF INITIATOR METHIONINE [LARGE SCALE ANALYSIS]</scope>
    <scope>IDENTIFICATION BY MASS SPECTROMETRY [LARGE SCALE ANALYSIS]</scope>
</reference>
<reference key="14">
    <citation type="journal article" date="2009" name="Science">
        <title>Lysine acetylation targets protein complexes and co-regulates major cellular functions.</title>
        <authorList>
            <person name="Choudhary C."/>
            <person name="Kumar C."/>
            <person name="Gnad F."/>
            <person name="Nielsen M.L."/>
            <person name="Rehman M."/>
            <person name="Walther T.C."/>
            <person name="Olsen J.V."/>
            <person name="Mann M."/>
        </authorList>
    </citation>
    <scope>ACETYLATION [LARGE SCALE ANALYSIS] AT LYS-264</scope>
    <scope>IDENTIFICATION BY MASS SPECTROMETRY [LARGE SCALE ANALYSIS]</scope>
</reference>
<reference key="15">
    <citation type="journal article" date="2011" name="BMC Syst. Biol.">
        <title>Initial characterization of the human central proteome.</title>
        <authorList>
            <person name="Burkard T.R."/>
            <person name="Planyavsky M."/>
            <person name="Kaupe I."/>
            <person name="Breitwieser F.P."/>
            <person name="Buerckstuemmer T."/>
            <person name="Bennett K.L."/>
            <person name="Superti-Furga G."/>
            <person name="Colinge J."/>
        </authorList>
    </citation>
    <scope>IDENTIFICATION BY MASS SPECTROMETRY [LARGE SCALE ANALYSIS]</scope>
</reference>
<reference key="16">
    <citation type="journal article" date="2012" name="Mol. Cell. Proteomics">
        <title>Comparative large-scale characterisation of plant vs. mammal proteins reveals similar and idiosyncratic N-alpha acetylation features.</title>
        <authorList>
            <person name="Bienvenut W.V."/>
            <person name="Sumpton D."/>
            <person name="Martinez A."/>
            <person name="Lilla S."/>
            <person name="Espagne C."/>
            <person name="Meinnel T."/>
            <person name="Giglione C."/>
        </authorList>
    </citation>
    <scope>ACETYLATION [LARGE SCALE ANALYSIS] AT ALA-2</scope>
    <scope>CLEAVAGE OF INITIATOR METHIONINE [LARGE SCALE ANALYSIS]</scope>
    <scope>IDENTIFICATION BY MASS SPECTROMETRY [LARGE SCALE ANALYSIS]</scope>
</reference>
<reference key="17">
    <citation type="journal article" date="2012" name="Proc. Natl. Acad. Sci. U.S.A.">
        <title>N-terminal acetylome analyses and functional insights of the N-terminal acetyltransferase NatB.</title>
        <authorList>
            <person name="Van Damme P."/>
            <person name="Lasa M."/>
            <person name="Polevoda B."/>
            <person name="Gazquez C."/>
            <person name="Elosegui-Artola A."/>
            <person name="Kim D.S."/>
            <person name="De Juan-Pardo E."/>
            <person name="Demeyer K."/>
            <person name="Hole K."/>
            <person name="Larrea E."/>
            <person name="Timmerman E."/>
            <person name="Prieto J."/>
            <person name="Arnesen T."/>
            <person name="Sherman F."/>
            <person name="Gevaert K."/>
            <person name="Aldabe R."/>
        </authorList>
    </citation>
    <scope>ACETYLATION [LARGE SCALE ANALYSIS] AT ALA-2</scope>
    <scope>CLEAVAGE OF INITIATOR METHIONINE [LARGE SCALE ANALYSIS]</scope>
    <scope>IDENTIFICATION BY MASS SPECTROMETRY [LARGE SCALE ANALYSIS]</scope>
</reference>
<reference key="18">
    <citation type="journal article" date="2013" name="Annu. Rev. Biochem.">
        <title>Molecular architecture and assembly of the eukaryotic proteasome.</title>
        <authorList>
            <person name="Tomko R.J. Jr."/>
            <person name="Hochstrasser M."/>
        </authorList>
    </citation>
    <scope>NOMENCLATURE</scope>
</reference>
<reference key="19">
    <citation type="journal article" date="2013" name="J. Proteome Res.">
        <title>Toward a comprehensive characterization of a human cancer cell phosphoproteome.</title>
        <authorList>
            <person name="Zhou H."/>
            <person name="Di Palma S."/>
            <person name="Preisinger C."/>
            <person name="Peng M."/>
            <person name="Polat A.N."/>
            <person name="Heck A.J."/>
            <person name="Mohammed S."/>
        </authorList>
    </citation>
    <scope>PHOSPHORYLATION [LARGE SCALE ANALYSIS] AT THR-18; THR-54 AND SER-180</scope>
    <scope>IDENTIFICATION BY MASS SPECTROMETRY [LARGE SCALE ANALYSIS]</scope>
    <source>
        <tissue>Cervix carcinoma</tissue>
        <tissue>Erythroleukemia</tissue>
    </source>
</reference>
<reference key="20">
    <citation type="journal article" date="2015" name="Proteomics">
        <title>N-terminome analysis of the human mitochondrial proteome.</title>
        <authorList>
            <person name="Vaca Jacome A.S."/>
            <person name="Rabilloud T."/>
            <person name="Schaeffer-Reiss C."/>
            <person name="Rompais M."/>
            <person name="Ayoub D."/>
            <person name="Lane L."/>
            <person name="Bairoch A."/>
            <person name="Van Dorsselaer A."/>
            <person name="Carapito C."/>
        </authorList>
    </citation>
    <scope>IDENTIFICATION BY MASS SPECTROMETRY [LARGE SCALE ANALYSIS]</scope>
</reference>
<evidence type="ECO:0000256" key="1">
    <source>
        <dbReference type="SAM" id="MobiDB-lite"/>
    </source>
</evidence>
<evidence type="ECO:0000269" key="2">
    <source>
    </source>
</evidence>
<evidence type="ECO:0000269" key="3">
    <source>
    </source>
</evidence>
<evidence type="ECO:0000269" key="4">
    <source>
    </source>
</evidence>
<evidence type="ECO:0000269" key="5">
    <source>
    </source>
</evidence>
<evidence type="ECO:0000303" key="6">
    <source>
    </source>
</evidence>
<evidence type="ECO:0000303" key="7">
    <source>
    </source>
</evidence>
<evidence type="ECO:0000303" key="8">
    <source ref="2"/>
</evidence>
<evidence type="ECO:0000305" key="9"/>
<evidence type="ECO:0000312" key="10">
    <source>
        <dbReference type="HGNC" id="HGNC:3043"/>
    </source>
</evidence>
<evidence type="ECO:0007744" key="11">
    <source>
    </source>
</evidence>
<evidence type="ECO:0007744" key="12">
    <source>
    </source>
</evidence>
<evidence type="ECO:0007744" key="13">
    <source>
    </source>
</evidence>
<evidence type="ECO:0007744" key="14">
    <source>
    </source>
</evidence>
<evidence type="ECO:0007744" key="15">
    <source>
    </source>
</evidence>
<evidence type="ECO:0007829" key="16">
    <source>
        <dbReference type="PDB" id="8QYJ"/>
    </source>
</evidence>
<evidence type="ECO:0007829" key="17">
    <source>
        <dbReference type="PDB" id="8QYL"/>
    </source>
</evidence>
<evidence type="ECO:0007829" key="18">
    <source>
        <dbReference type="PDB" id="8QYN"/>
    </source>
</evidence>
<evidence type="ECO:0007829" key="19">
    <source>
        <dbReference type="PDB" id="8TM3"/>
    </source>
</evidence>
<evidence type="ECO:0007829" key="20">
    <source>
        <dbReference type="PDB" id="8TM5"/>
    </source>
</evidence>
<name>PSMG1_HUMAN</name>
<proteinExistence type="evidence at protein level"/>
<organism>
    <name type="scientific">Homo sapiens</name>
    <name type="common">Human</name>
    <dbReference type="NCBI Taxonomy" id="9606"/>
    <lineage>
        <taxon>Eukaryota</taxon>
        <taxon>Metazoa</taxon>
        <taxon>Chordata</taxon>
        <taxon>Craniata</taxon>
        <taxon>Vertebrata</taxon>
        <taxon>Euteleostomi</taxon>
        <taxon>Mammalia</taxon>
        <taxon>Eutheria</taxon>
        <taxon>Euarchontoglires</taxon>
        <taxon>Primates</taxon>
        <taxon>Haplorrhini</taxon>
        <taxon>Catarrhini</taxon>
        <taxon>Hominidae</taxon>
        <taxon>Homo</taxon>
    </lineage>
</organism>
<comment type="function">
    <text evidence="3 4">Chaperone protein which promotes assembly of the 20S proteasome as part of a heterodimer with PSMG2. The PSMG1-PSMG2 heterodimer binds to the PSMA5 and PSMA7 proteasome subunits, promotes assembly of the proteasome alpha subunits into the heteroheptameric alpha ring and prevents alpha ring dimerization.</text>
</comment>
<comment type="subunit">
    <text evidence="3">Forms a heterodimer with PSMG2. The PSMG1-PSMG2 heterodimer interacts directly with the PSMA5 and PSMA7 proteasome alpha subunits.</text>
</comment>
<comment type="interaction">
    <interactant intactId="EBI-6286129">
        <id>O95456</id>
    </interactant>
    <interactant intactId="EBI-2805516">
        <id>P31321</id>
        <label>PRKAR1B</label>
    </interactant>
    <organismsDiffer>false</organismsDiffer>
    <experiments>3</experiments>
</comment>
<comment type="interaction">
    <interactant intactId="EBI-6286129">
        <id>O95456</id>
    </interactant>
    <interactant intactId="EBI-723276">
        <id>Q969U7</id>
        <label>PSMG2</label>
    </interactant>
    <organismsDiffer>false</organismsDiffer>
    <experiments>11</experiments>
</comment>
<comment type="subcellular location">
    <subcellularLocation>
        <location>Cytoplasm</location>
    </subcellularLocation>
    <subcellularLocation>
        <location>Endoplasmic reticulum</location>
    </subcellularLocation>
</comment>
<comment type="alternative products">
    <event type="alternative splicing"/>
    <isoform>
        <id>O95456-1</id>
        <name>1</name>
        <sequence type="displayed"/>
    </isoform>
    <isoform>
        <id>O95456-2</id>
        <name>2</name>
        <sequence type="described" ref="VSP_017261"/>
    </isoform>
</comment>
<comment type="tissue specificity">
    <text evidence="2 5">In the adult, detected in brain, colon, leukocytes, breast and testis. Widely expressed in the fetus. Also expressed in a variety of proliferating cell lines.</text>
</comment>
<comment type="PTM">
    <text>Degraded by the proteasome upon completion of 20S proteasome maturation.</text>
</comment>
<comment type="similarity">
    <text evidence="9">Belongs to the PSMG1 family.</text>
</comment>
<dbReference type="EMBL" id="AJ006291">
    <property type="protein sequence ID" value="CAA06957.1"/>
    <property type="molecule type" value="mRNA"/>
</dbReference>
<dbReference type="EMBL" id="AY463963">
    <property type="protein sequence ID" value="AAR25628.1"/>
    <property type="molecule type" value="mRNA"/>
</dbReference>
<dbReference type="EMBL" id="CR541821">
    <property type="protein sequence ID" value="CAG46620.1"/>
    <property type="molecule type" value="mRNA"/>
</dbReference>
<dbReference type="EMBL" id="CR541852">
    <property type="protein sequence ID" value="CAG46650.1"/>
    <property type="molecule type" value="mRNA"/>
</dbReference>
<dbReference type="EMBL" id="AB451468">
    <property type="protein sequence ID" value="BAG70282.1"/>
    <property type="molecule type" value="mRNA"/>
</dbReference>
<dbReference type="EMBL" id="AL163279">
    <property type="protein sequence ID" value="CAB90451.1"/>
    <property type="molecule type" value="Genomic_DNA"/>
</dbReference>
<dbReference type="EMBL" id="CH471079">
    <property type="protein sequence ID" value="EAX09664.1"/>
    <property type="molecule type" value="Genomic_DNA"/>
</dbReference>
<dbReference type="EMBL" id="CH471079">
    <property type="protein sequence ID" value="EAX09665.1"/>
    <property type="molecule type" value="Genomic_DNA"/>
</dbReference>
<dbReference type="EMBL" id="BC003619">
    <property type="protein sequence ID" value="AAH03619.1"/>
    <property type="molecule type" value="mRNA"/>
</dbReference>
<dbReference type="EMBL" id="BC010424">
    <property type="protein sequence ID" value="AAH10424.1"/>
    <property type="molecule type" value="mRNA"/>
</dbReference>
<dbReference type="EMBL" id="BC011755">
    <property type="protein sequence ID" value="AAH11755.1"/>
    <property type="molecule type" value="mRNA"/>
</dbReference>
<dbReference type="EMBL" id="BC012809">
    <property type="protein sequence ID" value="AAH12809.1"/>
    <property type="molecule type" value="mRNA"/>
</dbReference>
<dbReference type="EMBL" id="BR000236">
    <property type="protein sequence ID" value="FAA00022.1"/>
    <property type="molecule type" value="mRNA"/>
</dbReference>
<dbReference type="CCDS" id="CCDS13660.1">
    <molecule id="O95456-1"/>
</dbReference>
<dbReference type="CCDS" id="CCDS13661.1">
    <molecule id="O95456-2"/>
</dbReference>
<dbReference type="PIR" id="JE0290">
    <property type="entry name" value="JE0290"/>
</dbReference>
<dbReference type="RefSeq" id="NP_003711.1">
    <molecule id="O95456-1"/>
    <property type="nucleotide sequence ID" value="NM_003720.4"/>
</dbReference>
<dbReference type="RefSeq" id="NP_982257.1">
    <molecule id="O95456-2"/>
    <property type="nucleotide sequence ID" value="NM_203433.2"/>
</dbReference>
<dbReference type="PDB" id="8QYJ">
    <property type="method" value="EM"/>
    <property type="resolution" value="2.73 A"/>
    <property type="chains" value="I=1-288"/>
</dbReference>
<dbReference type="PDB" id="8QYL">
    <property type="method" value="EM"/>
    <property type="resolution" value="2.67 A"/>
    <property type="chains" value="I=1-288"/>
</dbReference>
<dbReference type="PDB" id="8QYM">
    <property type="method" value="EM"/>
    <property type="resolution" value="2.73 A"/>
    <property type="chains" value="I=1-288"/>
</dbReference>
<dbReference type="PDB" id="8QYN">
    <property type="method" value="EM"/>
    <property type="resolution" value="2.88 A"/>
    <property type="chains" value="I=1-288"/>
</dbReference>
<dbReference type="PDB" id="8QYS">
    <property type="method" value="EM"/>
    <property type="resolution" value="3.89 A"/>
    <property type="chains" value="I/Z=1-288"/>
</dbReference>
<dbReference type="PDB" id="8QZ9">
    <property type="method" value="EM"/>
    <property type="resolution" value="2.95 A"/>
    <property type="chains" value="I=1-288"/>
</dbReference>
<dbReference type="PDB" id="8TM3">
    <property type="method" value="EM"/>
    <property type="resolution" value="3.00 A"/>
    <property type="chains" value="c=1-288"/>
</dbReference>
<dbReference type="PDB" id="8TM4">
    <property type="method" value="EM"/>
    <property type="resolution" value="3.00 A"/>
    <property type="chains" value="c=1-288"/>
</dbReference>
<dbReference type="PDB" id="8TM5">
    <property type="method" value="EM"/>
    <property type="resolution" value="3.00 A"/>
    <property type="chains" value="c=1-288"/>
</dbReference>
<dbReference type="PDB" id="8TM6">
    <property type="method" value="EM"/>
    <property type="resolution" value="2.80 A"/>
    <property type="chains" value="c/f=1-288"/>
</dbReference>
<dbReference type="PDB" id="8YIX">
    <property type="method" value="EM"/>
    <property type="resolution" value="2.91 A"/>
    <property type="chains" value="f=1-288"/>
</dbReference>
<dbReference type="PDB" id="8YIY">
    <property type="method" value="EM"/>
    <property type="resolution" value="3.41 A"/>
    <property type="chains" value="c/f=1-288"/>
</dbReference>
<dbReference type="PDB" id="8YIZ">
    <property type="method" value="EM"/>
    <property type="resolution" value="3.79 A"/>
    <property type="chains" value="f=1-288"/>
</dbReference>
<dbReference type="PDBsum" id="8QYJ"/>
<dbReference type="PDBsum" id="8QYL"/>
<dbReference type="PDBsum" id="8QYM"/>
<dbReference type="PDBsum" id="8QYN"/>
<dbReference type="PDBsum" id="8QYS"/>
<dbReference type="PDBsum" id="8QZ9"/>
<dbReference type="PDBsum" id="8TM3"/>
<dbReference type="PDBsum" id="8TM4"/>
<dbReference type="PDBsum" id="8TM5"/>
<dbReference type="PDBsum" id="8TM6"/>
<dbReference type="PDBsum" id="8YIX"/>
<dbReference type="PDBsum" id="8YIY"/>
<dbReference type="PDBsum" id="8YIZ"/>
<dbReference type="EMDB" id="EMD-18755"/>
<dbReference type="EMDB" id="EMD-18757"/>
<dbReference type="EMDB" id="EMD-18758"/>
<dbReference type="EMDB" id="EMD-18759"/>
<dbReference type="EMDB" id="EMD-18761"/>
<dbReference type="EMDB" id="EMD-18773"/>
<dbReference type="EMDB" id="EMD-39332"/>
<dbReference type="EMDB" id="EMD-39333"/>
<dbReference type="EMDB" id="EMD-39334"/>
<dbReference type="EMDB" id="EMD-41377"/>
<dbReference type="EMDB" id="EMD-41378"/>
<dbReference type="EMDB" id="EMD-41379"/>
<dbReference type="EMDB" id="EMD-41380"/>
<dbReference type="SMR" id="O95456"/>
<dbReference type="BioGRID" id="114179">
    <property type="interactions" value="109"/>
</dbReference>
<dbReference type="ComplexPortal" id="CPX-8173">
    <property type="entry name" value="PSMG1-PSMG2 proteasomal chaperone complex"/>
</dbReference>
<dbReference type="CORUM" id="O95456"/>
<dbReference type="FunCoup" id="O95456">
    <property type="interactions" value="2126"/>
</dbReference>
<dbReference type="IntAct" id="O95456">
    <property type="interactions" value="65"/>
</dbReference>
<dbReference type="MINT" id="O95456"/>
<dbReference type="STRING" id="9606.ENSP00000329915"/>
<dbReference type="BindingDB" id="O95456"/>
<dbReference type="ChEMBL" id="CHEMBL3885624"/>
<dbReference type="GlyCosmos" id="O95456">
    <property type="glycosylation" value="1 site, 1 glycan"/>
</dbReference>
<dbReference type="GlyGen" id="O95456">
    <property type="glycosylation" value="1 site, 1 O-linked glycan (1 site)"/>
</dbReference>
<dbReference type="iPTMnet" id="O95456"/>
<dbReference type="PhosphoSitePlus" id="O95456"/>
<dbReference type="SwissPalm" id="O95456"/>
<dbReference type="BioMuta" id="PSMG1"/>
<dbReference type="jPOST" id="O95456"/>
<dbReference type="MassIVE" id="O95456"/>
<dbReference type="PaxDb" id="9606-ENSP00000329915"/>
<dbReference type="PeptideAtlas" id="O95456"/>
<dbReference type="ProteomicsDB" id="50890">
    <molecule id="O95456-1"/>
</dbReference>
<dbReference type="ProteomicsDB" id="50891">
    <molecule id="O95456-2"/>
</dbReference>
<dbReference type="Pumba" id="O95456"/>
<dbReference type="Antibodypedia" id="23276">
    <property type="antibodies" value="215 antibodies from 33 providers"/>
</dbReference>
<dbReference type="DNASU" id="8624"/>
<dbReference type="Ensembl" id="ENST00000331573.8">
    <molecule id="O95456-1"/>
    <property type="protein sequence ID" value="ENSP00000329915.3"/>
    <property type="gene ID" value="ENSG00000183527.12"/>
</dbReference>
<dbReference type="Ensembl" id="ENST00000380900.2">
    <molecule id="O95456-2"/>
    <property type="protein sequence ID" value="ENSP00000370286.2"/>
    <property type="gene ID" value="ENSG00000183527.12"/>
</dbReference>
<dbReference type="GeneID" id="8624"/>
<dbReference type="KEGG" id="hsa:8624"/>
<dbReference type="MANE-Select" id="ENST00000331573.8">
    <property type="protein sequence ID" value="ENSP00000329915.3"/>
    <property type="RefSeq nucleotide sequence ID" value="NM_003720.4"/>
    <property type="RefSeq protein sequence ID" value="NP_003711.1"/>
</dbReference>
<dbReference type="UCSC" id="uc002yxi.5">
    <molecule id="O95456-1"/>
    <property type="organism name" value="human"/>
</dbReference>
<dbReference type="AGR" id="HGNC:3043"/>
<dbReference type="CTD" id="8624"/>
<dbReference type="DisGeNET" id="8624"/>
<dbReference type="GeneCards" id="PSMG1"/>
<dbReference type="HGNC" id="HGNC:3043">
    <property type="gene designation" value="PSMG1"/>
</dbReference>
<dbReference type="HPA" id="ENSG00000183527">
    <property type="expression patterns" value="Tissue enhanced (testis)"/>
</dbReference>
<dbReference type="MIM" id="605296">
    <property type="type" value="gene"/>
</dbReference>
<dbReference type="neXtProt" id="NX_O95456"/>
<dbReference type="OpenTargets" id="ENSG00000183527"/>
<dbReference type="PharmGKB" id="PA162400229"/>
<dbReference type="VEuPathDB" id="HostDB:ENSG00000183527"/>
<dbReference type="eggNOG" id="ENOG502QTPH">
    <property type="taxonomic scope" value="Eukaryota"/>
</dbReference>
<dbReference type="GeneTree" id="ENSGT00500000044950"/>
<dbReference type="HOGENOM" id="CLU_083637_0_0_1"/>
<dbReference type="InParanoid" id="O95456"/>
<dbReference type="OMA" id="SVLICQV"/>
<dbReference type="OrthoDB" id="17536at2759"/>
<dbReference type="PAN-GO" id="O95456">
    <property type="GO annotations" value="3 GO annotations based on evolutionary models"/>
</dbReference>
<dbReference type="PhylomeDB" id="O95456"/>
<dbReference type="TreeFam" id="TF331909"/>
<dbReference type="PathwayCommons" id="O95456"/>
<dbReference type="Reactome" id="R-HSA-9907900">
    <property type="pathway name" value="Proteasome assembly"/>
</dbReference>
<dbReference type="SignaLink" id="O95456"/>
<dbReference type="BioGRID-ORCS" id="8624">
    <property type="hits" value="460 hits in 1165 CRISPR screens"/>
</dbReference>
<dbReference type="GeneWiki" id="DSCR2"/>
<dbReference type="GenomeRNAi" id="8624"/>
<dbReference type="Pharos" id="O95456">
    <property type="development level" value="Tbio"/>
</dbReference>
<dbReference type="PRO" id="PR:O95456"/>
<dbReference type="Proteomes" id="UP000005640">
    <property type="component" value="Chromosome 21"/>
</dbReference>
<dbReference type="RNAct" id="O95456">
    <property type="molecule type" value="protein"/>
</dbReference>
<dbReference type="Bgee" id="ENSG00000183527">
    <property type="expression patterns" value="Expressed in left testis and 100 other cell types or tissues"/>
</dbReference>
<dbReference type="ExpressionAtlas" id="O95456">
    <property type="expression patterns" value="baseline and differential"/>
</dbReference>
<dbReference type="GO" id="GO:0005737">
    <property type="term" value="C:cytoplasm"/>
    <property type="evidence" value="ECO:0000314"/>
    <property type="project" value="UniProtKB"/>
</dbReference>
<dbReference type="GO" id="GO:0005829">
    <property type="term" value="C:cytosol"/>
    <property type="evidence" value="ECO:0000314"/>
    <property type="project" value="HPA"/>
</dbReference>
<dbReference type="GO" id="GO:0005783">
    <property type="term" value="C:endoplasmic reticulum"/>
    <property type="evidence" value="ECO:0000314"/>
    <property type="project" value="UniProtKB"/>
</dbReference>
<dbReference type="GO" id="GO:0005794">
    <property type="term" value="C:Golgi apparatus"/>
    <property type="evidence" value="ECO:0000314"/>
    <property type="project" value="HPA"/>
</dbReference>
<dbReference type="GO" id="GO:0005654">
    <property type="term" value="C:nucleoplasm"/>
    <property type="evidence" value="ECO:0000314"/>
    <property type="project" value="HPA"/>
</dbReference>
<dbReference type="GO" id="GO:0005634">
    <property type="term" value="C:nucleus"/>
    <property type="evidence" value="ECO:0007005"/>
    <property type="project" value="UniProtKB"/>
</dbReference>
<dbReference type="GO" id="GO:0101031">
    <property type="term" value="C:protein folding chaperone complex"/>
    <property type="evidence" value="ECO:0000314"/>
    <property type="project" value="UniProtKB"/>
</dbReference>
<dbReference type="GO" id="GO:0060090">
    <property type="term" value="F:molecular adaptor activity"/>
    <property type="evidence" value="ECO:0000314"/>
    <property type="project" value="UniProtKB"/>
</dbReference>
<dbReference type="GO" id="GO:0070628">
    <property type="term" value="F:proteasome binding"/>
    <property type="evidence" value="ECO:0000318"/>
    <property type="project" value="GO_Central"/>
</dbReference>
<dbReference type="GO" id="GO:0021930">
    <property type="term" value="P:cerebellar granule cell precursor proliferation"/>
    <property type="evidence" value="ECO:0007669"/>
    <property type="project" value="Ensembl"/>
</dbReference>
<dbReference type="GO" id="GO:0051131">
    <property type="term" value="P:chaperone-mediated protein complex assembly"/>
    <property type="evidence" value="ECO:0000314"/>
    <property type="project" value="UniProtKB"/>
</dbReference>
<dbReference type="GO" id="GO:0080129">
    <property type="term" value="P:proteasome core complex assembly"/>
    <property type="evidence" value="ECO:0000318"/>
    <property type="project" value="GO_Central"/>
</dbReference>
<dbReference type="InterPro" id="IPR016565">
    <property type="entry name" value="Proteasome_assmbl_chp_1"/>
</dbReference>
<dbReference type="PANTHER" id="PTHR15069">
    <property type="entry name" value="PROTEASOME ASSEMBLY CHAPERONE 1"/>
    <property type="match status" value="1"/>
</dbReference>
<dbReference type="PANTHER" id="PTHR15069:SF1">
    <property type="entry name" value="PROTEASOME ASSEMBLY CHAPERONE 1"/>
    <property type="match status" value="1"/>
</dbReference>
<dbReference type="Pfam" id="PF16094">
    <property type="entry name" value="PAC1"/>
    <property type="match status" value="1"/>
</dbReference>
<dbReference type="PIRSF" id="PIRSF010076">
    <property type="entry name" value="Psome_chaperone-1"/>
    <property type="match status" value="1"/>
</dbReference>
<protein>
    <recommendedName>
        <fullName evidence="9">Proteasome assembly chaperone 1</fullName>
        <shortName evidence="7">PAC-1</shortName>
    </recommendedName>
    <alternativeName>
        <fullName>Chromosome 21 leucine-rich protein</fullName>
        <shortName>C21-LRP</shortName>
    </alternativeName>
    <alternativeName>
        <fullName>Down syndrome critical region protein 2</fullName>
    </alternativeName>
    <alternativeName>
        <fullName evidence="7">Proteasome chaperone homolog 1</fullName>
        <shortName evidence="7">Pba1</shortName>
    </alternativeName>
</protein>
<accession>O95456</accession>
<accession>B5BUN2</accession>
<accession>Q6FHA3</accession>
<accession>Q6FHD3</accession>
<accession>Q6S713</accession>
<gene>
    <name evidence="10" type="primary">PSMG1</name>
    <name type="synonym">C21LRP</name>
    <name type="synonym">DSCR2</name>
    <name type="synonym">PAC1</name>
</gene>